<evidence type="ECO:0000256" key="1">
    <source>
        <dbReference type="SAM" id="MobiDB-lite"/>
    </source>
</evidence>
<evidence type="ECO:0000305" key="2"/>
<gene>
    <name type="ORF">DDB_G0280783</name>
</gene>
<reference key="1">
    <citation type="journal article" date="2005" name="Nature">
        <title>The genome of the social amoeba Dictyostelium discoideum.</title>
        <authorList>
            <person name="Eichinger L."/>
            <person name="Pachebat J.A."/>
            <person name="Gloeckner G."/>
            <person name="Rajandream M.A."/>
            <person name="Sucgang R."/>
            <person name="Berriman M."/>
            <person name="Song J."/>
            <person name="Olsen R."/>
            <person name="Szafranski K."/>
            <person name="Xu Q."/>
            <person name="Tunggal B."/>
            <person name="Kummerfeld S."/>
            <person name="Madera M."/>
            <person name="Konfortov B.A."/>
            <person name="Rivero F."/>
            <person name="Bankier A.T."/>
            <person name="Lehmann R."/>
            <person name="Hamlin N."/>
            <person name="Davies R."/>
            <person name="Gaudet P."/>
            <person name="Fey P."/>
            <person name="Pilcher K."/>
            <person name="Chen G."/>
            <person name="Saunders D."/>
            <person name="Sodergren E.J."/>
            <person name="Davis P."/>
            <person name="Kerhornou A."/>
            <person name="Nie X."/>
            <person name="Hall N."/>
            <person name="Anjard C."/>
            <person name="Hemphill L."/>
            <person name="Bason N."/>
            <person name="Farbrother P."/>
            <person name="Desany B."/>
            <person name="Just E."/>
            <person name="Morio T."/>
            <person name="Rost R."/>
            <person name="Churcher C.M."/>
            <person name="Cooper J."/>
            <person name="Haydock S."/>
            <person name="van Driessche N."/>
            <person name="Cronin A."/>
            <person name="Goodhead I."/>
            <person name="Muzny D.M."/>
            <person name="Mourier T."/>
            <person name="Pain A."/>
            <person name="Lu M."/>
            <person name="Harper D."/>
            <person name="Lindsay R."/>
            <person name="Hauser H."/>
            <person name="James K.D."/>
            <person name="Quiles M."/>
            <person name="Madan Babu M."/>
            <person name="Saito T."/>
            <person name="Buchrieser C."/>
            <person name="Wardroper A."/>
            <person name="Felder M."/>
            <person name="Thangavelu M."/>
            <person name="Johnson D."/>
            <person name="Knights A."/>
            <person name="Loulseged H."/>
            <person name="Mungall K.L."/>
            <person name="Oliver K."/>
            <person name="Price C."/>
            <person name="Quail M.A."/>
            <person name="Urushihara H."/>
            <person name="Hernandez J."/>
            <person name="Rabbinowitsch E."/>
            <person name="Steffen D."/>
            <person name="Sanders M."/>
            <person name="Ma J."/>
            <person name="Kohara Y."/>
            <person name="Sharp S."/>
            <person name="Simmonds M.N."/>
            <person name="Spiegler S."/>
            <person name="Tivey A."/>
            <person name="Sugano S."/>
            <person name="White B."/>
            <person name="Walker D."/>
            <person name="Woodward J.R."/>
            <person name="Winckler T."/>
            <person name="Tanaka Y."/>
            <person name="Shaulsky G."/>
            <person name="Schleicher M."/>
            <person name="Weinstock G.M."/>
            <person name="Rosenthal A."/>
            <person name="Cox E.C."/>
            <person name="Chisholm R.L."/>
            <person name="Gibbs R.A."/>
            <person name="Loomis W.F."/>
            <person name="Platzer M."/>
            <person name="Kay R.R."/>
            <person name="Williams J.G."/>
            <person name="Dear P.H."/>
            <person name="Noegel A.A."/>
            <person name="Barrell B.G."/>
            <person name="Kuspa A."/>
        </authorList>
    </citation>
    <scope>NUCLEOTIDE SEQUENCE [LARGE SCALE GENOMIC DNA]</scope>
    <source>
        <strain>AX4</strain>
    </source>
</reference>
<dbReference type="EMBL" id="AAFI02000038">
    <property type="protein sequence ID" value="EAL67049.1"/>
    <property type="molecule type" value="Genomic_DNA"/>
</dbReference>
<dbReference type="RefSeq" id="XP_641026.1">
    <property type="nucleotide sequence ID" value="XM_635934.1"/>
</dbReference>
<dbReference type="FunCoup" id="Q54UW1">
    <property type="interactions" value="83"/>
</dbReference>
<dbReference type="STRING" id="44689.Q54UW1"/>
<dbReference type="PaxDb" id="44689-DDB0204729"/>
<dbReference type="EnsemblProtists" id="EAL67049">
    <property type="protein sequence ID" value="EAL67049"/>
    <property type="gene ID" value="DDB_G0280783"/>
</dbReference>
<dbReference type="GeneID" id="8622728"/>
<dbReference type="KEGG" id="ddi:DDB_G0280783"/>
<dbReference type="dictyBase" id="DDB_G0280783"/>
<dbReference type="VEuPathDB" id="AmoebaDB:DDB_G0280783"/>
<dbReference type="eggNOG" id="KOG3276">
    <property type="taxonomic scope" value="Eukaryota"/>
</dbReference>
<dbReference type="HOGENOM" id="CLU_2008225_0_0_1"/>
<dbReference type="InParanoid" id="Q54UW1"/>
<dbReference type="OMA" id="NICIQIL"/>
<dbReference type="PhylomeDB" id="Q54UW1"/>
<dbReference type="PRO" id="PR:Q54UW1"/>
<dbReference type="Proteomes" id="UP000002195">
    <property type="component" value="Chromosome 3"/>
</dbReference>
<dbReference type="GO" id="GO:0005737">
    <property type="term" value="C:cytoplasm"/>
    <property type="evidence" value="ECO:0000318"/>
    <property type="project" value="GO_Central"/>
</dbReference>
<dbReference type="Gene3D" id="3.30.1200.10">
    <property type="entry name" value="YggU-like"/>
    <property type="match status" value="1"/>
</dbReference>
<dbReference type="HAMAP" id="MF_00634">
    <property type="entry name" value="UPF0235"/>
    <property type="match status" value="1"/>
</dbReference>
<dbReference type="InterPro" id="IPR003746">
    <property type="entry name" value="DUF167"/>
</dbReference>
<dbReference type="InterPro" id="IPR036591">
    <property type="entry name" value="YggU-like_sf"/>
</dbReference>
<dbReference type="NCBIfam" id="TIGR00251">
    <property type="entry name" value="DUF167 family protein"/>
    <property type="match status" value="1"/>
</dbReference>
<dbReference type="PANTHER" id="PTHR13420">
    <property type="entry name" value="UPF0235 PROTEIN C15ORF40"/>
    <property type="match status" value="1"/>
</dbReference>
<dbReference type="PANTHER" id="PTHR13420:SF7">
    <property type="entry name" value="UPF0235 PROTEIN C15ORF40"/>
    <property type="match status" value="1"/>
</dbReference>
<dbReference type="Pfam" id="PF02594">
    <property type="entry name" value="DUF167"/>
    <property type="match status" value="1"/>
</dbReference>
<dbReference type="SMART" id="SM01152">
    <property type="entry name" value="DUF167"/>
    <property type="match status" value="1"/>
</dbReference>
<dbReference type="SUPFAM" id="SSF69786">
    <property type="entry name" value="YggU-like"/>
    <property type="match status" value="1"/>
</dbReference>
<protein>
    <recommendedName>
        <fullName>UPF0235 protein</fullName>
    </recommendedName>
</protein>
<proteinExistence type="inferred from homology"/>
<accession>Q54UW1</accession>
<comment type="similarity">
    <text evidence="2">Belongs to the UPF0235 family.</text>
</comment>
<sequence length="124" mass="13889">MTKKGSSNSSKQQQQQQQIIINNNAKVDEPIIKINVNVHPNSKESSIVSFEDQILSLRISEPPIDGKANIGVIEFLSKELNIRKSNIEVGKGSKSRNKSVEIDISSENITKDELFERIKSKLNN</sequence>
<keyword id="KW-1185">Reference proteome</keyword>
<name>U235_DICDI</name>
<organism>
    <name type="scientific">Dictyostelium discoideum</name>
    <name type="common">Social amoeba</name>
    <dbReference type="NCBI Taxonomy" id="44689"/>
    <lineage>
        <taxon>Eukaryota</taxon>
        <taxon>Amoebozoa</taxon>
        <taxon>Evosea</taxon>
        <taxon>Eumycetozoa</taxon>
        <taxon>Dictyostelia</taxon>
        <taxon>Dictyosteliales</taxon>
        <taxon>Dictyosteliaceae</taxon>
        <taxon>Dictyostelium</taxon>
    </lineage>
</organism>
<feature type="chain" id="PRO_0000330905" description="UPF0235 protein">
    <location>
        <begin position="1"/>
        <end position="124"/>
    </location>
</feature>
<feature type="region of interest" description="Disordered" evidence="1">
    <location>
        <begin position="1"/>
        <end position="22"/>
    </location>
</feature>